<organism>
    <name type="scientific">Rattus norvegicus</name>
    <name type="common">Rat</name>
    <dbReference type="NCBI Taxonomy" id="10116"/>
    <lineage>
        <taxon>Eukaryota</taxon>
        <taxon>Metazoa</taxon>
        <taxon>Chordata</taxon>
        <taxon>Craniata</taxon>
        <taxon>Vertebrata</taxon>
        <taxon>Euteleostomi</taxon>
        <taxon>Mammalia</taxon>
        <taxon>Eutheria</taxon>
        <taxon>Euarchontoglires</taxon>
        <taxon>Glires</taxon>
        <taxon>Rodentia</taxon>
        <taxon>Myomorpha</taxon>
        <taxon>Muroidea</taxon>
        <taxon>Muridae</taxon>
        <taxon>Murinae</taxon>
        <taxon>Rattus</taxon>
    </lineage>
</organism>
<reference key="1">
    <citation type="journal article" date="1994" name="Gene">
        <title>Differential CNS expression of alternative mRNA isoforms of the mammalian genes encoding cAMP-specific phosphodiesterases.</title>
        <authorList>
            <person name="Bolger G.B."/>
            <person name="Rodgers L."/>
            <person name="Riggs M."/>
        </authorList>
    </citation>
    <scope>NUCLEOTIDE SEQUENCE [MRNA]</scope>
</reference>
<reference key="2">
    <citation type="journal article" date="1989" name="Proc. Natl. Acad. Sci. U.S.A.">
        <title>Molecular cloning of rat homologues of the Drosophila melanogaster dunce cAMP phosphodiesterase: evidence for a family of genes.</title>
        <authorList>
            <person name="Swinnen J.V."/>
            <person name="Joseph D.R."/>
            <person name="Conti M."/>
        </authorList>
    </citation>
    <scope>NUCLEOTIDE SEQUENCE [MRNA] OF 153-511</scope>
    <source>
        <tissue>Testis</tissue>
    </source>
</reference>
<name>PDE4C_RAT</name>
<dbReference type="EC" id="3.1.4.53" evidence="2"/>
<dbReference type="EMBL" id="L27061">
    <property type="protein sequence ID" value="AAA56858.1"/>
    <property type="molecule type" value="mRNA"/>
</dbReference>
<dbReference type="EMBL" id="M25347">
    <property type="protein sequence ID" value="AAA41847.1"/>
    <property type="molecule type" value="mRNA"/>
</dbReference>
<dbReference type="PIR" id="I67945">
    <property type="entry name" value="I67945"/>
</dbReference>
<dbReference type="SMR" id="P14644"/>
<dbReference type="FunCoup" id="P14644">
    <property type="interactions" value="15"/>
</dbReference>
<dbReference type="STRING" id="10116.ENSRNOP00000026457"/>
<dbReference type="BindingDB" id="P14644"/>
<dbReference type="ChEMBL" id="CHEMBL2094267"/>
<dbReference type="DrugCentral" id="P14644"/>
<dbReference type="PhosphoSitePlus" id="P14644"/>
<dbReference type="PaxDb" id="10116-ENSRNOP00000026457"/>
<dbReference type="AGR" id="RGD:727918"/>
<dbReference type="RGD" id="727918">
    <property type="gene designation" value="Pde4c"/>
</dbReference>
<dbReference type="eggNOG" id="KOG3689">
    <property type="taxonomic scope" value="Eukaryota"/>
</dbReference>
<dbReference type="InParanoid" id="P14644"/>
<dbReference type="OrthoDB" id="189220at2759"/>
<dbReference type="PhylomeDB" id="P14644"/>
<dbReference type="Reactome" id="R-RNO-180024">
    <property type="pathway name" value="DARPP-32 events"/>
</dbReference>
<dbReference type="Reactome" id="R-RNO-418555">
    <property type="pathway name" value="G alpha (s) signalling events"/>
</dbReference>
<dbReference type="UniPathway" id="UPA00762">
    <property type="reaction ID" value="UER00747"/>
</dbReference>
<dbReference type="Proteomes" id="UP000002494">
    <property type="component" value="Unplaced"/>
</dbReference>
<dbReference type="GO" id="GO:0005929">
    <property type="term" value="C:cilium"/>
    <property type="evidence" value="ECO:0000250"/>
    <property type="project" value="UniProtKB"/>
</dbReference>
<dbReference type="GO" id="GO:0004115">
    <property type="term" value="F:3',5'-cyclic-AMP phosphodiesterase activity"/>
    <property type="evidence" value="ECO:0000250"/>
    <property type="project" value="UniProtKB"/>
</dbReference>
<dbReference type="GO" id="GO:0047555">
    <property type="term" value="F:3',5'-cyclic-GMP phosphodiesterase activity"/>
    <property type="evidence" value="ECO:0000318"/>
    <property type="project" value="GO_Central"/>
</dbReference>
<dbReference type="GO" id="GO:0046872">
    <property type="term" value="F:metal ion binding"/>
    <property type="evidence" value="ECO:0007669"/>
    <property type="project" value="UniProtKB-KW"/>
</dbReference>
<dbReference type="GO" id="GO:0006198">
    <property type="term" value="P:cAMP catabolic process"/>
    <property type="evidence" value="ECO:0007669"/>
    <property type="project" value="UniProtKB-UniPathway"/>
</dbReference>
<dbReference type="GO" id="GO:0019933">
    <property type="term" value="P:cAMP-mediated signaling"/>
    <property type="evidence" value="ECO:0000318"/>
    <property type="project" value="GO_Central"/>
</dbReference>
<dbReference type="GO" id="GO:0061179">
    <property type="term" value="P:negative regulation of insulin secretion involved in cellular response to glucose stimulus"/>
    <property type="evidence" value="ECO:0000315"/>
    <property type="project" value="RGD"/>
</dbReference>
<dbReference type="CDD" id="cd00077">
    <property type="entry name" value="HDc"/>
    <property type="match status" value="1"/>
</dbReference>
<dbReference type="FunFam" id="1.10.1300.10:FF:000001">
    <property type="entry name" value="Phosphodiesterase"/>
    <property type="match status" value="1"/>
</dbReference>
<dbReference type="Gene3D" id="1.10.1300.10">
    <property type="entry name" value="3'5'-cyclic nucleotide phosphodiesterase, catalytic domain"/>
    <property type="match status" value="1"/>
</dbReference>
<dbReference type="InterPro" id="IPR003607">
    <property type="entry name" value="HD/PDEase_dom"/>
</dbReference>
<dbReference type="InterPro" id="IPR040844">
    <property type="entry name" value="PDE4_UCR"/>
</dbReference>
<dbReference type="InterPro" id="IPR023088">
    <property type="entry name" value="PDEase"/>
</dbReference>
<dbReference type="InterPro" id="IPR002073">
    <property type="entry name" value="PDEase_catalytic_dom"/>
</dbReference>
<dbReference type="InterPro" id="IPR036971">
    <property type="entry name" value="PDEase_catalytic_dom_sf"/>
</dbReference>
<dbReference type="InterPro" id="IPR023174">
    <property type="entry name" value="PDEase_CS"/>
</dbReference>
<dbReference type="PANTHER" id="PTHR11347">
    <property type="entry name" value="CYCLIC NUCLEOTIDE PHOSPHODIESTERASE"/>
    <property type="match status" value="1"/>
</dbReference>
<dbReference type="Pfam" id="PF18100">
    <property type="entry name" value="PDE4_UCR"/>
    <property type="match status" value="1"/>
</dbReference>
<dbReference type="Pfam" id="PF00233">
    <property type="entry name" value="PDEase_I"/>
    <property type="match status" value="1"/>
</dbReference>
<dbReference type="PRINTS" id="PR00387">
    <property type="entry name" value="PDIESTERASE1"/>
</dbReference>
<dbReference type="SMART" id="SM00471">
    <property type="entry name" value="HDc"/>
    <property type="match status" value="1"/>
</dbReference>
<dbReference type="SUPFAM" id="SSF109604">
    <property type="entry name" value="HD-domain/PDEase-like"/>
    <property type="match status" value="1"/>
</dbReference>
<dbReference type="PROSITE" id="PS00126">
    <property type="entry name" value="PDEASE_I_1"/>
    <property type="match status" value="1"/>
</dbReference>
<dbReference type="PROSITE" id="PS51845">
    <property type="entry name" value="PDEASE_I_2"/>
    <property type="match status" value="1"/>
</dbReference>
<gene>
    <name evidence="8" type="primary">Pde4c</name>
    <name type="synonym">Dpde1</name>
</gene>
<protein>
    <recommendedName>
        <fullName evidence="7">3',5'-cyclic-AMP phosphodiesterase 4C</fullName>
        <ecNumber evidence="2">3.1.4.53</ecNumber>
    </recommendedName>
    <alternativeName>
        <fullName>DPDE1</fullName>
    </alternativeName>
    <alternativeName>
        <fullName evidence="7">cAMP-specific phosphodiesterase 4C</fullName>
    </alternativeName>
</protein>
<feature type="chain" id="PRO_0000198813" description="3',5'-cyclic-AMP phosphodiesterase 4C">
    <location>
        <begin position="1" status="less than"/>
        <end position="536"/>
    </location>
</feature>
<feature type="domain" description="PDEase" evidence="5">
    <location>
        <begin position="178"/>
        <end position="507"/>
    </location>
</feature>
<feature type="region of interest" description="Disordered" evidence="6">
    <location>
        <begin position="49"/>
        <end position="69"/>
    </location>
</feature>
<feature type="active site" description="Proton donor" evidence="1">
    <location>
        <position position="254"/>
    </location>
</feature>
<feature type="binding site" evidence="3">
    <location>
        <position position="254"/>
    </location>
    <ligand>
        <name>3',5'-cyclic AMP</name>
        <dbReference type="ChEBI" id="CHEBI:58165"/>
    </ligand>
</feature>
<feature type="binding site" evidence="1">
    <location>
        <position position="254"/>
    </location>
    <ligand>
        <name>AMP</name>
        <dbReference type="ChEBI" id="CHEBI:456215"/>
    </ligand>
</feature>
<feature type="binding site" evidence="1">
    <location>
        <position position="258"/>
    </location>
    <ligand>
        <name>AMP</name>
        <dbReference type="ChEBI" id="CHEBI:456215"/>
    </ligand>
</feature>
<feature type="binding site" evidence="2">
    <location>
        <position position="258"/>
    </location>
    <ligand>
        <name>Zn(2+)</name>
        <dbReference type="ChEBI" id="CHEBI:29105"/>
        <label>1</label>
    </ligand>
</feature>
<feature type="binding site" evidence="2">
    <location>
        <position position="294"/>
    </location>
    <ligand>
        <name>Zn(2+)</name>
        <dbReference type="ChEBI" id="CHEBI:29105"/>
        <label>1</label>
    </ligand>
</feature>
<feature type="binding site" evidence="1">
    <location>
        <position position="295"/>
    </location>
    <ligand>
        <name>AMP</name>
        <dbReference type="ChEBI" id="CHEBI:456215"/>
    </ligand>
</feature>
<feature type="binding site" evidence="2">
    <location>
        <position position="295"/>
    </location>
    <ligand>
        <name>Mg(2+)</name>
        <dbReference type="ChEBI" id="CHEBI:18420"/>
    </ligand>
</feature>
<feature type="binding site" evidence="1">
    <location>
        <position position="295"/>
    </location>
    <ligand>
        <name>Mn(2+)</name>
        <dbReference type="ChEBI" id="CHEBI:29035"/>
    </ligand>
</feature>
<feature type="binding site" evidence="2">
    <location>
        <position position="295"/>
    </location>
    <ligand>
        <name>Zn(2+)</name>
        <dbReference type="ChEBI" id="CHEBI:29105"/>
        <label>1</label>
    </ligand>
</feature>
<feature type="binding site" evidence="1">
    <location>
        <position position="295"/>
    </location>
    <ligand>
        <name>Zn(2+)</name>
        <dbReference type="ChEBI" id="CHEBI:29105"/>
        <label>2</label>
    </ligand>
</feature>
<feature type="binding site" evidence="1">
    <location>
        <position position="412"/>
    </location>
    <ligand>
        <name>AMP</name>
        <dbReference type="ChEBI" id="CHEBI:456215"/>
    </ligand>
</feature>
<feature type="binding site" evidence="2">
    <location>
        <position position="412"/>
    </location>
    <ligand>
        <name>Zn(2+)</name>
        <dbReference type="ChEBI" id="CHEBI:29105"/>
        <label>1</label>
    </ligand>
</feature>
<feature type="binding site" evidence="3">
    <location>
        <position position="463"/>
    </location>
    <ligand>
        <name>3',5'-cyclic AMP</name>
        <dbReference type="ChEBI" id="CHEBI:58165"/>
    </ligand>
</feature>
<feature type="binding site" evidence="1">
    <location>
        <position position="463"/>
    </location>
    <ligand>
        <name>AMP</name>
        <dbReference type="ChEBI" id="CHEBI:456215"/>
    </ligand>
</feature>
<feature type="binding site" evidence="3">
    <location>
        <position position="466"/>
    </location>
    <ligand>
        <name>3',5'-cyclic AMP</name>
        <dbReference type="ChEBI" id="CHEBI:58165"/>
    </ligand>
</feature>
<feature type="binding site" evidence="1">
    <location>
        <position position="466"/>
    </location>
    <ligand>
        <name>AMP</name>
        <dbReference type="ChEBI" id="CHEBI:456215"/>
    </ligand>
</feature>
<feature type="modified residue" description="Phosphoserine" evidence="4">
    <location>
        <position position="507"/>
    </location>
</feature>
<feature type="sequence conflict" description="In Ref. 2; AAA41847." evidence="7" ref="2">
    <original>R</original>
    <variation>S</variation>
    <location>
        <position position="218"/>
    </location>
</feature>
<feature type="sequence conflict" description="In Ref. 2; AAA41847." evidence="7" ref="2">
    <original>S</original>
    <variation>N</variation>
    <location>
        <position position="507"/>
    </location>
</feature>
<feature type="non-terminal residue">
    <location>
        <position position="1"/>
    </location>
</feature>
<accession>P14644</accession>
<comment type="function">
    <text evidence="2">Hydrolyzes the second messenger cAMP, which is a key regulator of many important physiological processes.</text>
</comment>
<comment type="catalytic activity">
    <reaction evidence="2">
        <text>3',5'-cyclic AMP + H2O = AMP + H(+)</text>
        <dbReference type="Rhea" id="RHEA:25277"/>
        <dbReference type="ChEBI" id="CHEBI:15377"/>
        <dbReference type="ChEBI" id="CHEBI:15378"/>
        <dbReference type="ChEBI" id="CHEBI:58165"/>
        <dbReference type="ChEBI" id="CHEBI:456215"/>
        <dbReference type="EC" id="3.1.4.53"/>
    </reaction>
    <physiologicalReaction direction="left-to-right" evidence="2">
        <dbReference type="Rhea" id="RHEA:25278"/>
    </physiologicalReaction>
</comment>
<comment type="cofactor">
    <cofactor evidence="2">
        <name>Zn(2+)</name>
        <dbReference type="ChEBI" id="CHEBI:29105"/>
    </cofactor>
    <text evidence="2">Binds 2 divalent metal cations per subunit. Site 1 may preferentially bind zinc ions.</text>
</comment>
<comment type="cofactor">
    <cofactor evidence="2">
        <name>Mg(2+)</name>
        <dbReference type="ChEBI" id="CHEBI:18420"/>
    </cofactor>
    <cofactor evidence="1">
        <name>Mn(2+)</name>
        <dbReference type="ChEBI" id="CHEBI:29035"/>
    </cofactor>
    <text evidence="1 2">Binds 2 divalent metal cations per subunit (By similarity). Site 2 has a preference for magnesium and/or manganese ions (By similarity).</text>
</comment>
<comment type="pathway">
    <text evidence="2">Purine metabolism; 3',5'-cyclic AMP degradation; AMP from 3',5'-cyclic AMP: step 1/1.</text>
</comment>
<comment type="subunit">
    <text evidence="4">Part of a complex containing AKAP5, ADCY5, ADCY6 and PKD2.</text>
</comment>
<comment type="subcellular location">
    <subcellularLocation>
        <location evidence="4">Cell projection</location>
        <location evidence="4">Cilium</location>
    </subcellularLocation>
</comment>
<comment type="similarity">
    <text evidence="7">Belongs to the cyclic nucleotide phosphodiesterase family. PDE4 subfamily.</text>
</comment>
<keyword id="KW-0114">cAMP</keyword>
<keyword id="KW-0966">Cell projection</keyword>
<keyword id="KW-0969">Cilium</keyword>
<keyword id="KW-0378">Hydrolase</keyword>
<keyword id="KW-0460">Magnesium</keyword>
<keyword id="KW-0464">Manganese</keyword>
<keyword id="KW-0479">Metal-binding</keyword>
<keyword id="KW-0597">Phosphoprotein</keyword>
<keyword id="KW-1185">Reference proteome</keyword>
<keyword id="KW-0862">Zinc</keyword>
<sequence length="536" mass="60064">NSSRTSSAASDLHGEDMIVTPFAQVLASLRTVRSNVAALAHGAGSATRQALLGTPPQSSQQAAPAEESGLQLAQETLEELDWCLEQLETLQTRRSVGEMASNKFKRMLNRELTHLSETSRSGNQVSEYISQTFLDQQAEVELPAPPTEDHPWPMAQITGLRKSCHTSLPTAAIPRFGVQTDQEEQLAKELEDTNKWGLDVFKVAELSGNRPLTAVIFRVLQERDLLKTFQIPADTLLRYLLTLEGHYHSNVAYHNSIHAADVVQSAHVLLGTPALEAVFTDLEVLAAIFACAIHDVDHPGVSNQFLINTNSELALMYNDSSVLENHHLAVGFKLLQGENCDIFQNLSTKQKLSLRRMVIDMVLATDMSKHMSLLADLKTMVETKKVTSLGVLLLDNYSDRIQVLQSLVHCADLSNPAKPLPLYRQWTERIMAEFFQQGDRERESGLDISPMCDKHTASVEKSQVGFIDYIAHPLWETWADLVHPDAQELLDTLEDNREWYQSRVPCSPPHAIGPDRFKFELTLEETEEEEEEDERH</sequence>
<evidence type="ECO:0000250" key="1">
    <source>
        <dbReference type="UniProtKB" id="Q07343"/>
    </source>
</evidence>
<evidence type="ECO:0000250" key="2">
    <source>
        <dbReference type="UniProtKB" id="Q08493"/>
    </source>
</evidence>
<evidence type="ECO:0000250" key="3">
    <source>
        <dbReference type="UniProtKB" id="Q08499"/>
    </source>
</evidence>
<evidence type="ECO:0000250" key="4">
    <source>
        <dbReference type="UniProtKB" id="Q3UEI1"/>
    </source>
</evidence>
<evidence type="ECO:0000255" key="5">
    <source>
        <dbReference type="PROSITE-ProRule" id="PRU01192"/>
    </source>
</evidence>
<evidence type="ECO:0000256" key="6">
    <source>
        <dbReference type="SAM" id="MobiDB-lite"/>
    </source>
</evidence>
<evidence type="ECO:0000305" key="7"/>
<evidence type="ECO:0000312" key="8">
    <source>
        <dbReference type="RGD" id="727918"/>
    </source>
</evidence>
<proteinExistence type="evidence at transcript level"/>